<dbReference type="EC" id="6.3.5.-" evidence="1"/>
<dbReference type="EMBL" id="AM295007">
    <property type="protein sequence ID" value="CAM29681.1"/>
    <property type="molecule type" value="Genomic_DNA"/>
</dbReference>
<dbReference type="RefSeq" id="WP_011888633.1">
    <property type="nucleotide sequence ID" value="NC_009332.1"/>
</dbReference>
<dbReference type="SMR" id="A2RCV8"/>
<dbReference type="KEGG" id="spf:SpyM50339"/>
<dbReference type="HOGENOM" id="CLU_019240_0_0_9"/>
<dbReference type="GO" id="GO:0050566">
    <property type="term" value="F:asparaginyl-tRNA synthase (glutamine-hydrolyzing) activity"/>
    <property type="evidence" value="ECO:0007669"/>
    <property type="project" value="RHEA"/>
</dbReference>
<dbReference type="GO" id="GO:0005524">
    <property type="term" value="F:ATP binding"/>
    <property type="evidence" value="ECO:0007669"/>
    <property type="project" value="UniProtKB-KW"/>
</dbReference>
<dbReference type="GO" id="GO:0050567">
    <property type="term" value="F:glutaminyl-tRNA synthase (glutamine-hydrolyzing) activity"/>
    <property type="evidence" value="ECO:0007669"/>
    <property type="project" value="UniProtKB-UniRule"/>
</dbReference>
<dbReference type="GO" id="GO:0070681">
    <property type="term" value="P:glutaminyl-tRNAGln biosynthesis via transamidation"/>
    <property type="evidence" value="ECO:0007669"/>
    <property type="project" value="TreeGrafter"/>
</dbReference>
<dbReference type="GO" id="GO:0006412">
    <property type="term" value="P:translation"/>
    <property type="evidence" value="ECO:0007669"/>
    <property type="project" value="UniProtKB-UniRule"/>
</dbReference>
<dbReference type="FunFam" id="1.10.10.410:FF:000001">
    <property type="entry name" value="Aspartyl/glutamyl-tRNA(Asn/Gln) amidotransferase subunit B"/>
    <property type="match status" value="1"/>
</dbReference>
<dbReference type="FunFam" id="1.10.150.380:FF:000001">
    <property type="entry name" value="Aspartyl/glutamyl-tRNA(Asn/Gln) amidotransferase subunit B"/>
    <property type="match status" value="1"/>
</dbReference>
<dbReference type="Gene3D" id="1.10.10.410">
    <property type="match status" value="1"/>
</dbReference>
<dbReference type="Gene3D" id="1.10.150.380">
    <property type="entry name" value="GatB domain, N-terminal subdomain"/>
    <property type="match status" value="1"/>
</dbReference>
<dbReference type="HAMAP" id="MF_00121">
    <property type="entry name" value="GatB"/>
    <property type="match status" value="1"/>
</dbReference>
<dbReference type="InterPro" id="IPR017959">
    <property type="entry name" value="Asn/Gln-tRNA_amidoTrfase_suB/E"/>
</dbReference>
<dbReference type="InterPro" id="IPR006075">
    <property type="entry name" value="Asn/Gln-tRNA_Trfase_suB/E_cat"/>
</dbReference>
<dbReference type="InterPro" id="IPR018027">
    <property type="entry name" value="Asn/Gln_amidotransferase"/>
</dbReference>
<dbReference type="InterPro" id="IPR003789">
    <property type="entry name" value="Asn/Gln_tRNA_amidoTrase-B-like"/>
</dbReference>
<dbReference type="InterPro" id="IPR004413">
    <property type="entry name" value="GatB"/>
</dbReference>
<dbReference type="InterPro" id="IPR042114">
    <property type="entry name" value="GatB_C_1"/>
</dbReference>
<dbReference type="InterPro" id="IPR023168">
    <property type="entry name" value="GatB_Yqey_C_2"/>
</dbReference>
<dbReference type="InterPro" id="IPR017958">
    <property type="entry name" value="Gln-tRNA_amidoTrfase_suB_CS"/>
</dbReference>
<dbReference type="InterPro" id="IPR014746">
    <property type="entry name" value="Gln_synth/guanido_kin_cat_dom"/>
</dbReference>
<dbReference type="NCBIfam" id="TIGR00133">
    <property type="entry name" value="gatB"/>
    <property type="match status" value="1"/>
</dbReference>
<dbReference type="NCBIfam" id="NF004011">
    <property type="entry name" value="PRK05477.1-1"/>
    <property type="match status" value="1"/>
</dbReference>
<dbReference type="NCBIfam" id="NF004012">
    <property type="entry name" value="PRK05477.1-2"/>
    <property type="match status" value="1"/>
</dbReference>
<dbReference type="NCBIfam" id="NF004014">
    <property type="entry name" value="PRK05477.1-4"/>
    <property type="match status" value="1"/>
</dbReference>
<dbReference type="PANTHER" id="PTHR11659">
    <property type="entry name" value="GLUTAMYL-TRNA GLN AMIDOTRANSFERASE SUBUNIT B MITOCHONDRIAL AND PROKARYOTIC PET112-RELATED"/>
    <property type="match status" value="1"/>
</dbReference>
<dbReference type="PANTHER" id="PTHR11659:SF0">
    <property type="entry name" value="GLUTAMYL-TRNA(GLN) AMIDOTRANSFERASE SUBUNIT B, MITOCHONDRIAL"/>
    <property type="match status" value="1"/>
</dbReference>
<dbReference type="Pfam" id="PF02934">
    <property type="entry name" value="GatB_N"/>
    <property type="match status" value="1"/>
</dbReference>
<dbReference type="Pfam" id="PF02637">
    <property type="entry name" value="GatB_Yqey"/>
    <property type="match status" value="1"/>
</dbReference>
<dbReference type="SMART" id="SM00845">
    <property type="entry name" value="GatB_Yqey"/>
    <property type="match status" value="1"/>
</dbReference>
<dbReference type="SUPFAM" id="SSF89095">
    <property type="entry name" value="GatB/YqeY motif"/>
    <property type="match status" value="1"/>
</dbReference>
<dbReference type="SUPFAM" id="SSF55931">
    <property type="entry name" value="Glutamine synthetase/guanido kinase"/>
    <property type="match status" value="1"/>
</dbReference>
<dbReference type="PROSITE" id="PS01234">
    <property type="entry name" value="GATB"/>
    <property type="match status" value="1"/>
</dbReference>
<organism>
    <name type="scientific">Streptococcus pyogenes serotype M5 (strain Manfredo)</name>
    <dbReference type="NCBI Taxonomy" id="160491"/>
    <lineage>
        <taxon>Bacteria</taxon>
        <taxon>Bacillati</taxon>
        <taxon>Bacillota</taxon>
        <taxon>Bacilli</taxon>
        <taxon>Lactobacillales</taxon>
        <taxon>Streptococcaceae</taxon>
        <taxon>Streptococcus</taxon>
    </lineage>
</organism>
<comment type="function">
    <text evidence="1">Allows the formation of correctly charged Asn-tRNA(Asn) or Gln-tRNA(Gln) through the transamidation of misacylated Asp-tRNA(Asn) or Glu-tRNA(Gln) in organisms which lack either or both of asparaginyl-tRNA or glutaminyl-tRNA synthetases. The reaction takes place in the presence of glutamine and ATP through an activated phospho-Asp-tRNA(Asn) or phospho-Glu-tRNA(Gln).</text>
</comment>
<comment type="catalytic activity">
    <reaction evidence="1">
        <text>L-glutamyl-tRNA(Gln) + L-glutamine + ATP + H2O = L-glutaminyl-tRNA(Gln) + L-glutamate + ADP + phosphate + H(+)</text>
        <dbReference type="Rhea" id="RHEA:17521"/>
        <dbReference type="Rhea" id="RHEA-COMP:9681"/>
        <dbReference type="Rhea" id="RHEA-COMP:9684"/>
        <dbReference type="ChEBI" id="CHEBI:15377"/>
        <dbReference type="ChEBI" id="CHEBI:15378"/>
        <dbReference type="ChEBI" id="CHEBI:29985"/>
        <dbReference type="ChEBI" id="CHEBI:30616"/>
        <dbReference type="ChEBI" id="CHEBI:43474"/>
        <dbReference type="ChEBI" id="CHEBI:58359"/>
        <dbReference type="ChEBI" id="CHEBI:78520"/>
        <dbReference type="ChEBI" id="CHEBI:78521"/>
        <dbReference type="ChEBI" id="CHEBI:456216"/>
    </reaction>
</comment>
<comment type="catalytic activity">
    <reaction evidence="1">
        <text>L-aspartyl-tRNA(Asn) + L-glutamine + ATP + H2O = L-asparaginyl-tRNA(Asn) + L-glutamate + ADP + phosphate + 2 H(+)</text>
        <dbReference type="Rhea" id="RHEA:14513"/>
        <dbReference type="Rhea" id="RHEA-COMP:9674"/>
        <dbReference type="Rhea" id="RHEA-COMP:9677"/>
        <dbReference type="ChEBI" id="CHEBI:15377"/>
        <dbReference type="ChEBI" id="CHEBI:15378"/>
        <dbReference type="ChEBI" id="CHEBI:29985"/>
        <dbReference type="ChEBI" id="CHEBI:30616"/>
        <dbReference type="ChEBI" id="CHEBI:43474"/>
        <dbReference type="ChEBI" id="CHEBI:58359"/>
        <dbReference type="ChEBI" id="CHEBI:78515"/>
        <dbReference type="ChEBI" id="CHEBI:78516"/>
        <dbReference type="ChEBI" id="CHEBI:456216"/>
    </reaction>
</comment>
<comment type="subunit">
    <text evidence="1">Heterotrimer of A, B and C subunits.</text>
</comment>
<comment type="similarity">
    <text evidence="1">Belongs to the GatB/GatE family. GatB subfamily.</text>
</comment>
<name>GATB_STRPG</name>
<proteinExistence type="inferred from homology"/>
<protein>
    <recommendedName>
        <fullName evidence="1">Aspartyl/glutamyl-tRNA(Asn/Gln) amidotransferase subunit B</fullName>
        <shortName evidence="1">Asp/Glu-ADT subunit B</shortName>
        <ecNumber evidence="1">6.3.5.-</ecNumber>
    </recommendedName>
</protein>
<sequence>MNFETIIGLEVHVELNTNSKIFSPSSAHFGEDPNANTNVIDWSFPGVLPVMNKGVIDAGIKAALALNMDIHKEMHFDRKNYFYPDNPKAYQISQFDEPIGYNGWIEIKLEDGSTKKIRIERAHLEEDAGKNTHGTDGYSYVDLNRQGVPLIEIVSEADMRSPEEAYTYLTALKEIIQYTGISDVKMEEGSMRVDANISLRPYGQEQFGTKTELKNLNSFSNVRKGLEFEVERQAKLLRSGGVIRQETRRYDEANKGTILMRVKEGAADYRYFPEPDLPLYEIDDAWIDEMRAQLPQFPAQRRAKYEEELGLSAYDASQLTATKALSDFFETAVSLGGDAKQVSNWLQGEVAQFLNAEGKTIEEIRLTPDNLVEMIAIIADGTISSKMAKKVFVHLAKNGGSARAYVEKAGLVQISDPAVLVPIIHQVFADNEAAVADFKSGKRNADKAFTGFLMKATKGQANPQVAQQLLAQELQKLRD</sequence>
<evidence type="ECO:0000255" key="1">
    <source>
        <dbReference type="HAMAP-Rule" id="MF_00121"/>
    </source>
</evidence>
<keyword id="KW-0067">ATP-binding</keyword>
<keyword id="KW-0436">Ligase</keyword>
<keyword id="KW-0547">Nucleotide-binding</keyword>
<keyword id="KW-0648">Protein biosynthesis</keyword>
<gene>
    <name evidence="1" type="primary">gatB</name>
    <name type="ordered locus">SpyM50339</name>
</gene>
<feature type="chain" id="PRO_1000016048" description="Aspartyl/glutamyl-tRNA(Asn/Gln) amidotransferase subunit B">
    <location>
        <begin position="1"/>
        <end position="479"/>
    </location>
</feature>
<reference key="1">
    <citation type="journal article" date="2007" name="J. Bacteriol.">
        <title>Complete genome of acute rheumatic fever-associated serotype M5 Streptococcus pyogenes strain Manfredo.</title>
        <authorList>
            <person name="Holden M.T.G."/>
            <person name="Scott A."/>
            <person name="Cherevach I."/>
            <person name="Chillingworth T."/>
            <person name="Churcher C."/>
            <person name="Cronin A."/>
            <person name="Dowd L."/>
            <person name="Feltwell T."/>
            <person name="Hamlin N."/>
            <person name="Holroyd S."/>
            <person name="Jagels K."/>
            <person name="Moule S."/>
            <person name="Mungall K."/>
            <person name="Quail M.A."/>
            <person name="Price C."/>
            <person name="Rabbinowitsch E."/>
            <person name="Sharp S."/>
            <person name="Skelton J."/>
            <person name="Whitehead S."/>
            <person name="Barrell B.G."/>
            <person name="Kehoe M."/>
            <person name="Parkhill J."/>
        </authorList>
    </citation>
    <scope>NUCLEOTIDE SEQUENCE [LARGE SCALE GENOMIC DNA]</scope>
    <source>
        <strain>Manfredo</strain>
    </source>
</reference>
<accession>A2RCV8</accession>